<name>CASA2_EQUAS</name>
<feature type="signal peptide" evidence="3 8">
    <location>
        <begin position="1"/>
        <end position="15"/>
    </location>
</feature>
<feature type="chain" id="PRO_5000419614" description="Alpha-S2-casein">
    <location>
        <begin position="16"/>
        <end position="236"/>
    </location>
</feature>
<feature type="region of interest" description="Disordered" evidence="4">
    <location>
        <begin position="72"/>
        <end position="93"/>
    </location>
</feature>
<feature type="compositionally biased region" description="Basic and acidic residues" evidence="4">
    <location>
        <begin position="84"/>
        <end position="93"/>
    </location>
</feature>
<feature type="modified residue" description="Phosphoserine" evidence="2">
    <location>
        <position position="23"/>
    </location>
</feature>
<feature type="modified residue" description="Phosphoserine" evidence="2">
    <location>
        <position position="24"/>
    </location>
</feature>
<feature type="modified residue" description="Phosphoserine" evidence="2">
    <location>
        <position position="25"/>
    </location>
</feature>
<feature type="modified residue" description="Phosphoserine" evidence="2">
    <location>
        <position position="28"/>
    </location>
</feature>
<feature type="modified residue" description="Phosphoserine" evidence="2">
    <location>
        <position position="47"/>
    </location>
</feature>
<feature type="modified residue" description="Phosphoserine" evidence="2">
    <location>
        <position position="80"/>
    </location>
</feature>
<feature type="modified residue" description="Phosphoserine" evidence="2">
    <location>
        <position position="81"/>
    </location>
</feature>
<feature type="modified residue" description="Phosphoserine" evidence="2">
    <location>
        <position position="82"/>
    </location>
</feature>
<feature type="modified residue" description="Phosphoserine" evidence="2">
    <location>
        <position position="85"/>
    </location>
</feature>
<feature type="modified residue" description="Phosphoserine" evidence="1">
    <location>
        <position position="157"/>
    </location>
</feature>
<feature type="modified residue" description="Phosphoserine" evidence="2">
    <location>
        <position position="169"/>
    </location>
</feature>
<feature type="sequence variant" description="In A1d and A2d." evidence="6">
    <location>
        <begin position="27"/>
        <end position="57"/>
    </location>
</feature>
<feature type="sequence variant" description="In A1 and A1d." evidence="6">
    <location>
        <begin position="191"/>
        <end position="195"/>
    </location>
</feature>
<feature type="sequence variant" description="In A2 and A2d." evidence="6">
    <location>
        <begin position="227"/>
        <end position="233"/>
    </location>
</feature>
<accession>B7VGF9</accession>
<dbReference type="EMBL" id="FM946022">
    <property type="protein sequence ID" value="CAV00691.1"/>
    <property type="molecule type" value="mRNA"/>
</dbReference>
<dbReference type="RefSeq" id="XP_014702742.1">
    <property type="nucleotide sequence ID" value="XM_014847256.1"/>
</dbReference>
<dbReference type="SMR" id="B7VGF9"/>
<dbReference type="Proteomes" id="UP000694387">
    <property type="component" value="Unplaced"/>
</dbReference>
<dbReference type="GO" id="GO:0005615">
    <property type="term" value="C:extracellular space"/>
    <property type="evidence" value="ECO:0007669"/>
    <property type="project" value="TreeGrafter"/>
</dbReference>
<dbReference type="GO" id="GO:0042803">
    <property type="term" value="F:protein homodimerization activity"/>
    <property type="evidence" value="ECO:0007669"/>
    <property type="project" value="TreeGrafter"/>
</dbReference>
<dbReference type="GO" id="GO:0035375">
    <property type="term" value="F:zymogen binding"/>
    <property type="evidence" value="ECO:0007669"/>
    <property type="project" value="TreeGrafter"/>
</dbReference>
<dbReference type="InterPro" id="IPR011175">
    <property type="entry name" value="Alpha-s2_casein"/>
</dbReference>
<dbReference type="InterPro" id="IPR001588">
    <property type="entry name" value="Casein"/>
</dbReference>
<dbReference type="InterPro" id="IPR031305">
    <property type="entry name" value="Casein_CS"/>
</dbReference>
<dbReference type="PANTHER" id="PTHR16656">
    <property type="entry name" value="ALPHA-S2-CASEIN-LIKE B"/>
    <property type="match status" value="1"/>
</dbReference>
<dbReference type="PANTHER" id="PTHR16656:SF5">
    <property type="entry name" value="ALPHA-S2-CASEIN-LIKE B"/>
    <property type="match status" value="1"/>
</dbReference>
<dbReference type="Pfam" id="PF00363">
    <property type="entry name" value="Casein"/>
    <property type="match status" value="1"/>
</dbReference>
<dbReference type="PIRSF" id="PIRSF002371">
    <property type="entry name" value="Alpha-s2-casein"/>
    <property type="match status" value="1"/>
</dbReference>
<dbReference type="PROSITE" id="PS00306">
    <property type="entry name" value="CASEIN_ALPHA_BETA"/>
    <property type="match status" value="1"/>
</dbReference>
<keyword id="KW-0903">Direct protein sequencing</keyword>
<keyword id="KW-0494">Milk protein</keyword>
<keyword id="KW-0597">Phosphoprotein</keyword>
<keyword id="KW-1185">Reference proteome</keyword>
<keyword id="KW-0964">Secreted</keyword>
<keyword id="KW-0732">Signal</keyword>
<organism>
    <name type="scientific">Equus asinus</name>
    <name type="common">Donkey</name>
    <name type="synonym">Equus africanus asinus</name>
    <dbReference type="NCBI Taxonomy" id="9793"/>
    <lineage>
        <taxon>Eukaryota</taxon>
        <taxon>Metazoa</taxon>
        <taxon>Chordata</taxon>
        <taxon>Craniata</taxon>
        <taxon>Vertebrata</taxon>
        <taxon>Euteleostomi</taxon>
        <taxon>Mammalia</taxon>
        <taxon>Eutheria</taxon>
        <taxon>Laurasiatheria</taxon>
        <taxon>Perissodactyla</taxon>
        <taxon>Equidae</taxon>
        <taxon>Equus</taxon>
    </lineage>
</organism>
<proteinExistence type="evidence at protein level"/>
<sequence length="236" mass="27700">MKFFIFTCLLAVALAKHNMEHRSSSEDSVNISQEKFKQEKYVVIPTSKESICSTSCEEATRNINEMESAKFPTEVYSSSSSSEESAKFPTEREEKEVEEKHHLKQLNKINQFYEKLNFLQYLQALRQPRIVLTPWDQTKTGASPFIPIVNTEQLFTSEEIPKKTVDMESTEVVTEKTELTEEEKNYLKLLNKINQYYEKFTLPQYFKIVHQHQTTMDPQSHSKTNSYQIIPVLRYF</sequence>
<protein>
    <recommendedName>
        <fullName evidence="8">Alpha-S2-casein</fullName>
    </recommendedName>
</protein>
<evidence type="ECO:0000250" key="1">
    <source>
        <dbReference type="UniProtKB" id="O97944"/>
    </source>
</evidence>
<evidence type="ECO:0000250" key="2">
    <source>
        <dbReference type="UniProtKB" id="P02663"/>
    </source>
</evidence>
<evidence type="ECO:0000255" key="3"/>
<evidence type="ECO:0000256" key="4">
    <source>
        <dbReference type="SAM" id="MobiDB-lite"/>
    </source>
</evidence>
<evidence type="ECO:0000269" key="5">
    <source>
    </source>
</evidence>
<evidence type="ECO:0000269" key="6">
    <source>
    </source>
</evidence>
<evidence type="ECO:0000305" key="7"/>
<evidence type="ECO:0000312" key="8">
    <source>
        <dbReference type="EMBL" id="CAV00691.1"/>
    </source>
</evidence>
<gene>
    <name evidence="8" type="primary">CSN1S2</name>
</gene>
<comment type="function">
    <text evidence="2">Important role in the capacity of milk to transport calcium phosphate.</text>
</comment>
<comment type="subcellular location">
    <subcellularLocation>
        <location>Secreted</location>
    </subcellularLocation>
</comment>
<comment type="tissue specificity">
    <text>Mammary gland specific. Secreted in milk.</text>
</comment>
<comment type="PTM">
    <text evidence="5">There are at least three different forms found in milk, with varying degrees of phosphorylation. These include form 10-P which is phosphorylated at ten sites that have not been determined, form 11-P which is phosphorylated at eleven sites and form 12-P which is phosphorylated at twelve sites.</text>
</comment>
<comment type="mass spectrometry" mass="26029.0" method="MALDI" evidence="5">
    <text>Variant A and dephosphorylated.</text>
</comment>
<comment type="mass spectrometry" mass="26829.0" method="MALDI" evidence="5">
    <text>Form 10-P.</text>
</comment>
<comment type="mass spectrometry" mass="26909.0" method="MALDI" evidence="5">
    <text>Form 11-P.</text>
</comment>
<comment type="mass spectrometry" mass="26989.0" method="MALDI" evidence="5">
    <text>Form 12-P.</text>
</comment>
<comment type="mass spectrometry" mass="25429.0" method="MALDI" evidence="6">
    <text>Variant A1.</text>
</comment>
<comment type="mass spectrometry" mass="21939.0" method="MALDI" evidence="6">
    <text>Variant A1d.</text>
</comment>
<comment type="mass spectrometry" mass="25203.0" method="MALDI" evidence="6">
    <text>Variant A2.</text>
</comment>
<comment type="mass spectrometry" mass="21713.0" method="MALDI" evidence="6">
    <text>Variant A2d.</text>
</comment>
<comment type="similarity">
    <text evidence="3">Belongs to the alpha-casein family.</text>
</comment>
<reference evidence="7 8" key="1">
    <citation type="submission" date="2008-12" db="EMBL/GenBank/DDBJ databases">
        <authorList>
            <person name="Ramunno L."/>
        </authorList>
    </citation>
    <scope>NUCLEOTIDE SEQUENCE [MRNA]</scope>
    <source>
        <tissue evidence="8">Mammary gland</tissue>
    </source>
</reference>
<reference key="2">
    <citation type="journal article" date="2012" name="J. Mass Spectrom.">
        <title>MS-based characterization of alpha(s2)-casein isoforms in donkey's milk.</title>
        <authorList>
            <person name="Saletti R."/>
            <person name="Muccilli V."/>
            <person name="Cunsolo V."/>
            <person name="Fontanini D."/>
            <person name="Capocchi A."/>
            <person name="Foti S."/>
        </authorList>
    </citation>
    <scope>PROTEIN SEQUENCE OF 16-236</scope>
    <scope>MASS SPECTROMETRY</scope>
    <scope>VARIANT A1 191-ASN--GLN-195 DEL</scope>
    <scope>VARIANTS A1D 27-ASP--GLU-57 DEL AND 191-ASN--GLN-195 DEL</scope>
    <scope>VARIANT A2 227-TYR--LEU-233 DEL</scope>
    <scope>VARIANTS A2D 27-ASP--GLU-57 DEL AND 227-TYR--LEU-233 DEL</scope>
    <source>
        <strain>Ragusana</strain>
        <tissue>Milk</tissue>
    </source>
</reference>
<reference evidence="7" key="3">
    <citation type="journal article" date="2010" name="J. Chromatogr. A">
        <title>Proteomic characterization of donkey milk 'caseome'.</title>
        <authorList>
            <person name="Chianese L."/>
            <person name="Calabrese M.G."/>
            <person name="Ferranti P."/>
            <person name="Mauriello R."/>
            <person name="Garro G."/>
            <person name="De Simone C."/>
            <person name="Quarto M."/>
            <person name="Addeo F."/>
            <person name="Cosenza G."/>
            <person name="Ramunno L."/>
        </authorList>
    </citation>
    <scope>PHOSPHORYLATION</scope>
    <scope>MASS SPECTROMETRY</scope>
</reference>